<organism>
    <name type="scientific">Salinibacter ruber (strain DSM 13855 / M31)</name>
    <dbReference type="NCBI Taxonomy" id="309807"/>
    <lineage>
        <taxon>Bacteria</taxon>
        <taxon>Pseudomonadati</taxon>
        <taxon>Rhodothermota</taxon>
        <taxon>Rhodothermia</taxon>
        <taxon>Rhodothermales</taxon>
        <taxon>Salinibacteraceae</taxon>
        <taxon>Salinibacter</taxon>
    </lineage>
</organism>
<comment type="function">
    <text evidence="1">Catalyzes the formation of phosphatidylethanolamine (PtdEtn) from phosphatidylserine (PtdSer).</text>
</comment>
<comment type="catalytic activity">
    <reaction evidence="1">
        <text>a 1,2-diacyl-sn-glycero-3-phospho-L-serine + H(+) = a 1,2-diacyl-sn-glycero-3-phosphoethanolamine + CO2</text>
        <dbReference type="Rhea" id="RHEA:20828"/>
        <dbReference type="ChEBI" id="CHEBI:15378"/>
        <dbReference type="ChEBI" id="CHEBI:16526"/>
        <dbReference type="ChEBI" id="CHEBI:57262"/>
        <dbReference type="ChEBI" id="CHEBI:64612"/>
        <dbReference type="EC" id="4.1.1.65"/>
    </reaction>
</comment>
<comment type="cofactor">
    <cofactor evidence="1">
        <name>pyruvate</name>
        <dbReference type="ChEBI" id="CHEBI:15361"/>
    </cofactor>
    <text evidence="1">Binds 1 pyruvoyl group covalently per subunit.</text>
</comment>
<comment type="pathway">
    <text evidence="1">Phospholipid metabolism; phosphatidylethanolamine biosynthesis; phosphatidylethanolamine from CDP-diacylglycerol: step 2/2.</text>
</comment>
<comment type="subunit">
    <text evidence="1">Heterodimer of a large membrane-associated beta subunit and a small pyruvoyl-containing alpha subunit.</text>
</comment>
<comment type="subcellular location">
    <subcellularLocation>
        <location evidence="1">Cell membrane</location>
        <topology evidence="1">Peripheral membrane protein</topology>
    </subcellularLocation>
</comment>
<comment type="PTM">
    <text evidence="1">Is synthesized initially as an inactive proenzyme. Formation of the active enzyme involves a self-maturation process in which the active site pyruvoyl group is generated from an internal serine residue via an autocatalytic post-translational modification. Two non-identical subunits are generated from the proenzyme in this reaction, and the pyruvate is formed at the N-terminus of the alpha chain, which is derived from the carboxyl end of the proenzyme. The post-translation cleavage follows an unusual pathway, termed non-hydrolytic serinolysis, in which the side chain hydroxyl group of the serine supplies its oxygen atom to form the C-terminus of the beta chain, while the remainder of the serine residue undergoes an oxidative deamination to produce ammonia and the pyruvoyl prosthetic group on the alpha chain.</text>
</comment>
<comment type="similarity">
    <text evidence="1">Belongs to the phosphatidylserine decarboxylase family. PSD-A subfamily.</text>
</comment>
<dbReference type="EC" id="4.1.1.65" evidence="1"/>
<dbReference type="EMBL" id="CP000159">
    <property type="protein sequence ID" value="ABC44517.1"/>
    <property type="molecule type" value="Genomic_DNA"/>
</dbReference>
<dbReference type="RefSeq" id="YP_445093.1">
    <property type="nucleotide sequence ID" value="NC_007677.1"/>
</dbReference>
<dbReference type="STRING" id="309807.SRU_0961"/>
<dbReference type="EnsemblBacteria" id="ABC44517">
    <property type="protein sequence ID" value="ABC44517"/>
    <property type="gene ID" value="SRU_0961"/>
</dbReference>
<dbReference type="KEGG" id="sru:SRU_0961"/>
<dbReference type="PATRIC" id="fig|309807.25.peg.996"/>
<dbReference type="eggNOG" id="COG0688">
    <property type="taxonomic scope" value="Bacteria"/>
</dbReference>
<dbReference type="HOGENOM" id="CLU_072492_2_0_10"/>
<dbReference type="OrthoDB" id="9790893at2"/>
<dbReference type="UniPathway" id="UPA00558">
    <property type="reaction ID" value="UER00616"/>
</dbReference>
<dbReference type="Proteomes" id="UP000008674">
    <property type="component" value="Chromosome"/>
</dbReference>
<dbReference type="GO" id="GO:0005886">
    <property type="term" value="C:plasma membrane"/>
    <property type="evidence" value="ECO:0007669"/>
    <property type="project" value="UniProtKB-SubCell"/>
</dbReference>
<dbReference type="GO" id="GO:0004609">
    <property type="term" value="F:phosphatidylserine decarboxylase activity"/>
    <property type="evidence" value="ECO:0007669"/>
    <property type="project" value="UniProtKB-UniRule"/>
</dbReference>
<dbReference type="GO" id="GO:0006646">
    <property type="term" value="P:phosphatidylethanolamine biosynthetic process"/>
    <property type="evidence" value="ECO:0007669"/>
    <property type="project" value="UniProtKB-UniRule"/>
</dbReference>
<dbReference type="HAMAP" id="MF_00664">
    <property type="entry name" value="PS_decarb_PSD_A"/>
    <property type="match status" value="1"/>
</dbReference>
<dbReference type="InterPro" id="IPR003817">
    <property type="entry name" value="PS_Dcarbxylase"/>
</dbReference>
<dbReference type="InterPro" id="IPR033175">
    <property type="entry name" value="PSD-A"/>
</dbReference>
<dbReference type="PANTHER" id="PTHR35809">
    <property type="entry name" value="ARCHAETIDYLSERINE DECARBOXYLASE PROENZYME-RELATED"/>
    <property type="match status" value="1"/>
</dbReference>
<dbReference type="PANTHER" id="PTHR35809:SF1">
    <property type="entry name" value="ARCHAETIDYLSERINE DECARBOXYLASE PROENZYME-RELATED"/>
    <property type="match status" value="1"/>
</dbReference>
<dbReference type="Pfam" id="PF02666">
    <property type="entry name" value="PS_Dcarbxylase"/>
    <property type="match status" value="1"/>
</dbReference>
<evidence type="ECO:0000255" key="1">
    <source>
        <dbReference type="HAMAP-Rule" id="MF_00664"/>
    </source>
</evidence>
<evidence type="ECO:0000256" key="2">
    <source>
        <dbReference type="SAM" id="MobiDB-lite"/>
    </source>
</evidence>
<proteinExistence type="inferred from homology"/>
<name>PSD_SALRD</name>
<keyword id="KW-1003">Cell membrane</keyword>
<keyword id="KW-0210">Decarboxylase</keyword>
<keyword id="KW-0444">Lipid biosynthesis</keyword>
<keyword id="KW-0443">Lipid metabolism</keyword>
<keyword id="KW-0456">Lyase</keyword>
<keyword id="KW-0472">Membrane</keyword>
<keyword id="KW-0594">Phospholipid biosynthesis</keyword>
<keyword id="KW-1208">Phospholipid metabolism</keyword>
<keyword id="KW-0670">Pyruvate</keyword>
<keyword id="KW-1185">Reference proteome</keyword>
<keyword id="KW-0865">Zymogen</keyword>
<accession>Q2S3Y8</accession>
<sequence length="227" mass="24582">MLTGGALWVDAWLWRGPMLTLAVGGLAFVLYFFRDPERTPPADALEAGIVAPADGRVVEIAEEDDPLYLEGPARRISIFLSPLDVHVNRVPARGVIEHAEYRPGDYLVAWHPKASEKNERSEFGLRHPTGTKLLFKQIAGAVARRIEYDLREGDTVETGARFGIVKFGSRMDLLVPPSVELHAKEGQVVRAGTTVLGRIPTPESGRSSSAEATAAPSASSARRSSAS</sequence>
<protein>
    <recommendedName>
        <fullName evidence="1">Phosphatidylserine decarboxylase proenzyme</fullName>
        <ecNumber evidence="1">4.1.1.65</ecNumber>
    </recommendedName>
    <component>
        <recommendedName>
            <fullName evidence="1">Phosphatidylserine decarboxylase alpha chain</fullName>
        </recommendedName>
    </component>
    <component>
        <recommendedName>
            <fullName evidence="1">Phosphatidylserine decarboxylase beta chain</fullName>
        </recommendedName>
    </component>
</protein>
<gene>
    <name evidence="1" type="primary">psd</name>
    <name type="ordered locus">SRU_0961</name>
</gene>
<reference key="1">
    <citation type="journal article" date="2005" name="Proc. Natl. Acad. Sci. U.S.A.">
        <title>The genome of Salinibacter ruber: convergence and gene exchange among hyperhalophilic bacteria and archaea.</title>
        <authorList>
            <person name="Mongodin E.F."/>
            <person name="Nelson K.E."/>
            <person name="Daugherty S."/>
            <person name="DeBoy R.T."/>
            <person name="Wister J."/>
            <person name="Khouri H."/>
            <person name="Weidman J."/>
            <person name="Walsh D.A."/>
            <person name="Papke R.T."/>
            <person name="Sanchez Perez G."/>
            <person name="Sharma A.K."/>
            <person name="Nesbo C.L."/>
            <person name="MacLeod D."/>
            <person name="Bapteste E."/>
            <person name="Doolittle W.F."/>
            <person name="Charlebois R.L."/>
            <person name="Legault B."/>
            <person name="Rodriguez-Valera F."/>
        </authorList>
    </citation>
    <scope>NUCLEOTIDE SEQUENCE [LARGE SCALE GENOMIC DNA]</scope>
    <source>
        <strain>DSM 13855 / CECT 5946 / M31</strain>
    </source>
</reference>
<feature type="chain" id="PRO_0000262267" description="Phosphatidylserine decarboxylase beta chain" evidence="1">
    <location>
        <begin position="1"/>
        <end position="168"/>
    </location>
</feature>
<feature type="chain" id="PRO_0000262268" description="Phosphatidylserine decarboxylase alpha chain" evidence="1">
    <location>
        <begin position="169"/>
        <end position="227"/>
    </location>
</feature>
<feature type="region of interest" description="Disordered" evidence="2">
    <location>
        <begin position="197"/>
        <end position="227"/>
    </location>
</feature>
<feature type="compositionally biased region" description="Low complexity" evidence="2">
    <location>
        <begin position="206"/>
        <end position="227"/>
    </location>
</feature>
<feature type="active site" description="Schiff-base intermediate with substrate; via pyruvic acid" evidence="1">
    <location>
        <position position="169"/>
    </location>
</feature>
<feature type="site" description="Cleavage (non-hydrolytic); by autocatalysis" evidence="1">
    <location>
        <begin position="168"/>
        <end position="169"/>
    </location>
</feature>
<feature type="modified residue" description="Pyruvic acid (Ser); by autocatalysis" evidence="1">
    <location>
        <position position="169"/>
    </location>
</feature>